<reference key="1">
    <citation type="journal article" date="2006" name="Genome Res.">
        <title>Skewed genomic variability in strains of the toxigenic bacterial pathogen, Clostridium perfringens.</title>
        <authorList>
            <person name="Myers G.S.A."/>
            <person name="Rasko D.A."/>
            <person name="Cheung J.K."/>
            <person name="Ravel J."/>
            <person name="Seshadri R."/>
            <person name="DeBoy R.T."/>
            <person name="Ren Q."/>
            <person name="Varga J."/>
            <person name="Awad M.M."/>
            <person name="Brinkac L.M."/>
            <person name="Daugherty S.C."/>
            <person name="Haft D.H."/>
            <person name="Dodson R.J."/>
            <person name="Madupu R."/>
            <person name="Nelson W.C."/>
            <person name="Rosovitz M.J."/>
            <person name="Sullivan S.A."/>
            <person name="Khouri H."/>
            <person name="Dimitrov G.I."/>
            <person name="Watkins K.L."/>
            <person name="Mulligan S."/>
            <person name="Benton J."/>
            <person name="Radune D."/>
            <person name="Fisher D.J."/>
            <person name="Atkins H.S."/>
            <person name="Hiscox T."/>
            <person name="Jost B.H."/>
            <person name="Billington S.J."/>
            <person name="Songer J.G."/>
            <person name="McClane B.A."/>
            <person name="Titball R.W."/>
            <person name="Rood J.I."/>
            <person name="Melville S.B."/>
            <person name="Paulsen I.T."/>
        </authorList>
    </citation>
    <scope>NUCLEOTIDE SEQUENCE [LARGE SCALE GENOMIC DNA]</scope>
    <source>
        <strain>ATCC 13124 / DSM 756 / JCM 1290 / NCIMB 6125 / NCTC 8237 / S 107 / Type A</strain>
    </source>
</reference>
<comment type="function">
    <text evidence="1">Responsible for synthesis of pseudouridine from uracil-55 in the psi GC loop of transfer RNAs.</text>
</comment>
<comment type="catalytic activity">
    <reaction evidence="1">
        <text>uridine(55) in tRNA = pseudouridine(55) in tRNA</text>
        <dbReference type="Rhea" id="RHEA:42532"/>
        <dbReference type="Rhea" id="RHEA-COMP:10101"/>
        <dbReference type="Rhea" id="RHEA-COMP:10102"/>
        <dbReference type="ChEBI" id="CHEBI:65314"/>
        <dbReference type="ChEBI" id="CHEBI:65315"/>
        <dbReference type="EC" id="5.4.99.25"/>
    </reaction>
</comment>
<comment type="similarity">
    <text evidence="1">Belongs to the pseudouridine synthase TruB family. Type 1 subfamily.</text>
</comment>
<organism>
    <name type="scientific">Clostridium perfringens (strain ATCC 13124 / DSM 756 / JCM 1290 / NCIMB 6125 / NCTC 8237 / Type A)</name>
    <dbReference type="NCBI Taxonomy" id="195103"/>
    <lineage>
        <taxon>Bacteria</taxon>
        <taxon>Bacillati</taxon>
        <taxon>Bacillota</taxon>
        <taxon>Clostridia</taxon>
        <taxon>Eubacteriales</taxon>
        <taxon>Clostridiaceae</taxon>
        <taxon>Clostridium</taxon>
    </lineage>
</organism>
<feature type="chain" id="PRO_1000084574" description="tRNA pseudouridine synthase B">
    <location>
        <begin position="1"/>
        <end position="294"/>
    </location>
</feature>
<feature type="active site" description="Nucleophile" evidence="1">
    <location>
        <position position="38"/>
    </location>
</feature>
<proteinExistence type="inferred from homology"/>
<keyword id="KW-0413">Isomerase</keyword>
<keyword id="KW-0819">tRNA processing</keyword>
<evidence type="ECO:0000255" key="1">
    <source>
        <dbReference type="HAMAP-Rule" id="MF_01080"/>
    </source>
</evidence>
<protein>
    <recommendedName>
        <fullName evidence="1">tRNA pseudouridine synthase B</fullName>
        <ecNumber evidence="1">5.4.99.25</ecNumber>
    </recommendedName>
    <alternativeName>
        <fullName evidence="1">tRNA pseudouridine(55) synthase</fullName>
        <shortName evidence="1">Psi55 synthase</shortName>
    </alternativeName>
    <alternativeName>
        <fullName evidence="1">tRNA pseudouridylate synthase</fullName>
    </alternativeName>
    <alternativeName>
        <fullName evidence="1">tRNA-uridine isomerase</fullName>
    </alternativeName>
</protein>
<gene>
    <name evidence="1" type="primary">truB</name>
    <name type="ordered locus">CPF_1937</name>
</gene>
<sequence>MNGVINIYKNTGMTSFDVVAIVRRVAKMKKVGHTGTLDPAASGVLPVCLGKATKIIDYIMENKKVYRVNLKLGMVTDTYDLEGEVLREEDASHITKDEILNCINSFLGTIDQVPPMYSALKQNGVRLYELARQGIEVHREARKITIYSIENIKIESNDNIQMDVCCSKGTYIRSLCYDIGEKLNVGATMTALERIQNGTFTKEEAINIEDLTEELLEKHIISIEKALDSFEKITVNEKFGKLLRNGVKVFDNRMYSEEVEFNKLYRVYEDNGVFLGLGKRDEKGFKLEKLLIEE</sequence>
<dbReference type="EC" id="5.4.99.25" evidence="1"/>
<dbReference type="EMBL" id="CP000246">
    <property type="protein sequence ID" value="ABG83260.1"/>
    <property type="molecule type" value="Genomic_DNA"/>
</dbReference>
<dbReference type="RefSeq" id="WP_003459755.1">
    <property type="nucleotide sequence ID" value="NC_008261.1"/>
</dbReference>
<dbReference type="SMR" id="Q0TPS0"/>
<dbReference type="STRING" id="195103.CPF_1937"/>
<dbReference type="PaxDb" id="195103-CPF_1937"/>
<dbReference type="GeneID" id="93001779"/>
<dbReference type="KEGG" id="cpf:CPF_1937"/>
<dbReference type="eggNOG" id="COG0130">
    <property type="taxonomic scope" value="Bacteria"/>
</dbReference>
<dbReference type="HOGENOM" id="CLU_032087_0_1_9"/>
<dbReference type="Proteomes" id="UP000001823">
    <property type="component" value="Chromosome"/>
</dbReference>
<dbReference type="GO" id="GO:0003723">
    <property type="term" value="F:RNA binding"/>
    <property type="evidence" value="ECO:0007669"/>
    <property type="project" value="InterPro"/>
</dbReference>
<dbReference type="GO" id="GO:0160148">
    <property type="term" value="F:tRNA pseudouridine(55) synthase activity"/>
    <property type="evidence" value="ECO:0007669"/>
    <property type="project" value="UniProtKB-EC"/>
</dbReference>
<dbReference type="GO" id="GO:1990481">
    <property type="term" value="P:mRNA pseudouridine synthesis"/>
    <property type="evidence" value="ECO:0007669"/>
    <property type="project" value="TreeGrafter"/>
</dbReference>
<dbReference type="GO" id="GO:0031119">
    <property type="term" value="P:tRNA pseudouridine synthesis"/>
    <property type="evidence" value="ECO:0007669"/>
    <property type="project" value="UniProtKB-UniRule"/>
</dbReference>
<dbReference type="CDD" id="cd02573">
    <property type="entry name" value="PseudoU_synth_EcTruB"/>
    <property type="match status" value="1"/>
</dbReference>
<dbReference type="FunFam" id="3.30.2350.10:FF:000011">
    <property type="entry name" value="tRNA pseudouridine synthase B"/>
    <property type="match status" value="1"/>
</dbReference>
<dbReference type="Gene3D" id="3.30.2350.10">
    <property type="entry name" value="Pseudouridine synthase"/>
    <property type="match status" value="1"/>
</dbReference>
<dbReference type="HAMAP" id="MF_01080">
    <property type="entry name" value="TruB_bact"/>
    <property type="match status" value="1"/>
</dbReference>
<dbReference type="InterPro" id="IPR020103">
    <property type="entry name" value="PsdUridine_synth_cat_dom_sf"/>
</dbReference>
<dbReference type="InterPro" id="IPR002501">
    <property type="entry name" value="PsdUridine_synth_N"/>
</dbReference>
<dbReference type="InterPro" id="IPR014780">
    <property type="entry name" value="tRNA_psdUridine_synth_TruB"/>
</dbReference>
<dbReference type="InterPro" id="IPR032819">
    <property type="entry name" value="TruB_C"/>
</dbReference>
<dbReference type="NCBIfam" id="TIGR00431">
    <property type="entry name" value="TruB"/>
    <property type="match status" value="1"/>
</dbReference>
<dbReference type="PANTHER" id="PTHR13767:SF2">
    <property type="entry name" value="PSEUDOURIDYLATE SYNTHASE TRUB1"/>
    <property type="match status" value="1"/>
</dbReference>
<dbReference type="PANTHER" id="PTHR13767">
    <property type="entry name" value="TRNA-PSEUDOURIDINE SYNTHASE"/>
    <property type="match status" value="1"/>
</dbReference>
<dbReference type="Pfam" id="PF16198">
    <property type="entry name" value="TruB_C_2"/>
    <property type="match status" value="1"/>
</dbReference>
<dbReference type="Pfam" id="PF01509">
    <property type="entry name" value="TruB_N"/>
    <property type="match status" value="1"/>
</dbReference>
<dbReference type="SUPFAM" id="SSF55120">
    <property type="entry name" value="Pseudouridine synthase"/>
    <property type="match status" value="1"/>
</dbReference>
<accession>Q0TPS0</accession>
<name>TRUB_CLOP1</name>